<sequence>MPVIESAIQRVRLTKKQHDRNEPQASAYRTAVKRFEKAAAAGEDNLAELYKIASSAIDRAHSKGLIKKNKASREKSRLAKYVK</sequence>
<name>RS20_LEUCK</name>
<protein>
    <recommendedName>
        <fullName evidence="1">Small ribosomal subunit protein bS20</fullName>
    </recommendedName>
    <alternativeName>
        <fullName evidence="2">30S ribosomal protein S20</fullName>
    </alternativeName>
</protein>
<accession>B1N066</accession>
<evidence type="ECO:0000255" key="1">
    <source>
        <dbReference type="HAMAP-Rule" id="MF_00500"/>
    </source>
</evidence>
<evidence type="ECO:0000305" key="2"/>
<proteinExistence type="inferred from homology"/>
<comment type="function">
    <text evidence="1">Binds directly to 16S ribosomal RNA.</text>
</comment>
<comment type="similarity">
    <text evidence="1">Belongs to the bacterial ribosomal protein bS20 family.</text>
</comment>
<feature type="chain" id="PRO_1000126471" description="Small ribosomal subunit protein bS20">
    <location>
        <begin position="1"/>
        <end position="83"/>
    </location>
</feature>
<dbReference type="EMBL" id="DQ489736">
    <property type="protein sequence ID" value="ACA83168.1"/>
    <property type="molecule type" value="Genomic_DNA"/>
</dbReference>
<dbReference type="RefSeq" id="WP_004902547.1">
    <property type="nucleotide sequence ID" value="NC_010471.1"/>
</dbReference>
<dbReference type="SMR" id="B1N066"/>
<dbReference type="STRING" id="349519.LCK_01344"/>
<dbReference type="GeneID" id="61101638"/>
<dbReference type="KEGG" id="lci:LCK_01344"/>
<dbReference type="eggNOG" id="COG0268">
    <property type="taxonomic scope" value="Bacteria"/>
</dbReference>
<dbReference type="HOGENOM" id="CLU_160655_1_1_9"/>
<dbReference type="OrthoDB" id="9808392at2"/>
<dbReference type="Proteomes" id="UP000002166">
    <property type="component" value="Chromosome"/>
</dbReference>
<dbReference type="GO" id="GO:0005829">
    <property type="term" value="C:cytosol"/>
    <property type="evidence" value="ECO:0007669"/>
    <property type="project" value="TreeGrafter"/>
</dbReference>
<dbReference type="GO" id="GO:0015935">
    <property type="term" value="C:small ribosomal subunit"/>
    <property type="evidence" value="ECO:0007669"/>
    <property type="project" value="TreeGrafter"/>
</dbReference>
<dbReference type="GO" id="GO:0070181">
    <property type="term" value="F:small ribosomal subunit rRNA binding"/>
    <property type="evidence" value="ECO:0007669"/>
    <property type="project" value="TreeGrafter"/>
</dbReference>
<dbReference type="GO" id="GO:0003735">
    <property type="term" value="F:structural constituent of ribosome"/>
    <property type="evidence" value="ECO:0007669"/>
    <property type="project" value="InterPro"/>
</dbReference>
<dbReference type="GO" id="GO:0006412">
    <property type="term" value="P:translation"/>
    <property type="evidence" value="ECO:0007669"/>
    <property type="project" value="UniProtKB-UniRule"/>
</dbReference>
<dbReference type="Gene3D" id="1.20.58.110">
    <property type="entry name" value="Ribosomal protein S20"/>
    <property type="match status" value="1"/>
</dbReference>
<dbReference type="HAMAP" id="MF_00500">
    <property type="entry name" value="Ribosomal_bS20"/>
    <property type="match status" value="1"/>
</dbReference>
<dbReference type="InterPro" id="IPR002583">
    <property type="entry name" value="Ribosomal_bS20"/>
</dbReference>
<dbReference type="InterPro" id="IPR036510">
    <property type="entry name" value="Ribosomal_bS20_sf"/>
</dbReference>
<dbReference type="NCBIfam" id="TIGR00029">
    <property type="entry name" value="S20"/>
    <property type="match status" value="1"/>
</dbReference>
<dbReference type="PANTHER" id="PTHR33398">
    <property type="entry name" value="30S RIBOSOMAL PROTEIN S20"/>
    <property type="match status" value="1"/>
</dbReference>
<dbReference type="PANTHER" id="PTHR33398:SF1">
    <property type="entry name" value="SMALL RIBOSOMAL SUBUNIT PROTEIN BS20C"/>
    <property type="match status" value="1"/>
</dbReference>
<dbReference type="Pfam" id="PF01649">
    <property type="entry name" value="Ribosomal_S20p"/>
    <property type="match status" value="1"/>
</dbReference>
<dbReference type="SUPFAM" id="SSF46992">
    <property type="entry name" value="Ribosomal protein S20"/>
    <property type="match status" value="1"/>
</dbReference>
<reference key="1">
    <citation type="journal article" date="2008" name="J. Bacteriol.">
        <title>Complete genome sequence of Leuconostoc citreum KM20.</title>
        <authorList>
            <person name="Kim J.F."/>
            <person name="Jeong H."/>
            <person name="Lee J.-S."/>
            <person name="Choi S.-H."/>
            <person name="Ha M."/>
            <person name="Hur C.-G."/>
            <person name="Kim J.-S."/>
            <person name="Lee S."/>
            <person name="Park H.-S."/>
            <person name="Park Y.-H."/>
            <person name="Oh T.K."/>
        </authorList>
    </citation>
    <scope>NUCLEOTIDE SEQUENCE [LARGE SCALE GENOMIC DNA]</scope>
    <source>
        <strain>KM20</strain>
    </source>
</reference>
<gene>
    <name evidence="1" type="primary">rpsT</name>
    <name type="ordered locus">LCK_01344</name>
</gene>
<keyword id="KW-1185">Reference proteome</keyword>
<keyword id="KW-0687">Ribonucleoprotein</keyword>
<keyword id="KW-0689">Ribosomal protein</keyword>
<keyword id="KW-0694">RNA-binding</keyword>
<keyword id="KW-0699">rRNA-binding</keyword>
<organism>
    <name type="scientific">Leuconostoc citreum (strain KM20)</name>
    <dbReference type="NCBI Taxonomy" id="349519"/>
    <lineage>
        <taxon>Bacteria</taxon>
        <taxon>Bacillati</taxon>
        <taxon>Bacillota</taxon>
        <taxon>Bacilli</taxon>
        <taxon>Lactobacillales</taxon>
        <taxon>Lactobacillaceae</taxon>
        <taxon>Leuconostoc</taxon>
    </lineage>
</organism>